<name>YCPW_PSETP</name>
<protein>
    <recommendedName>
        <fullName>Uncharacterized phycocyanin operon protein W</fullName>
    </recommendedName>
    <alternativeName>
        <fullName>ORF W</fullName>
    </alternativeName>
</protein>
<organism>
    <name type="scientific">Pseudanabaena tenuis (strain PCC 7409)</name>
    <dbReference type="NCBI Taxonomy" id="29415"/>
    <lineage>
        <taxon>Bacteria</taxon>
        <taxon>Bacillati</taxon>
        <taxon>Cyanobacteriota</taxon>
        <taxon>Cyanophyceae</taxon>
        <taxon>Pseudanabaenales</taxon>
        <taxon>Pseudanabaenaceae</taxon>
        <taxon>Pseudanabaena</taxon>
    </lineage>
</organism>
<comment type="induction">
    <text>Present in both red- and green-light-grown cells.</text>
</comment>
<reference key="1">
    <citation type="journal article" date="1991" name="Mol. Microbiol.">
        <title>Molecular cloning and transcriptional analysis of the cpeBA operon of the cyanobacterium Pseudanabaena species PCC7409.</title>
        <authorList>
            <person name="Dubbs J.M."/>
            <person name="Bryant D.A."/>
        </authorList>
    </citation>
    <scope>NUCLEOTIDE SEQUENCE [GENOMIC DNA]</scope>
</reference>
<accession>P29298</accession>
<feature type="chain" id="PRO_0000199286" description="Uncharacterized phycocyanin operon protein W">
    <location>
        <begin position="1"/>
        <end position="106" status="greater than"/>
    </location>
</feature>
<feature type="non-terminal residue">
    <location>
        <position position="106"/>
    </location>
</feature>
<sequence>MSDPKESAAVASLYNTYPFPPEPILDEPPPGYNWRWNWQAAYSFCTGQKPSRDNIRILDAGCGSGVSTEYLVHLNPEATVVGIDLSEGTLAVAKERCQRSEQLEPN</sequence>
<keyword id="KW-0042">Antenna complex</keyword>
<keyword id="KW-0605">Phycobilisome</keyword>
<dbReference type="EMBL" id="X63073">
    <property type="protein sequence ID" value="CAA44798.1"/>
    <property type="molecule type" value="Genomic_DNA"/>
</dbReference>
<dbReference type="PIR" id="S18529">
    <property type="entry name" value="S18529"/>
</dbReference>
<dbReference type="SMR" id="P29298"/>
<dbReference type="GO" id="GO:0030089">
    <property type="term" value="C:phycobilisome"/>
    <property type="evidence" value="ECO:0007669"/>
    <property type="project" value="UniProtKB-KW"/>
</dbReference>
<dbReference type="GO" id="GO:0008168">
    <property type="term" value="F:methyltransferase activity"/>
    <property type="evidence" value="ECO:0007669"/>
    <property type="project" value="TreeGrafter"/>
</dbReference>
<dbReference type="CDD" id="cd02440">
    <property type="entry name" value="AdoMet_MTases"/>
    <property type="match status" value="1"/>
</dbReference>
<dbReference type="Gene3D" id="3.40.50.150">
    <property type="entry name" value="Vaccinia Virus protein VP39"/>
    <property type="match status" value="1"/>
</dbReference>
<dbReference type="InterPro" id="IPR025714">
    <property type="entry name" value="Methyltranfer_dom"/>
</dbReference>
<dbReference type="InterPro" id="IPR029063">
    <property type="entry name" value="SAM-dependent_MTases_sf"/>
</dbReference>
<dbReference type="PANTHER" id="PTHR43464">
    <property type="entry name" value="METHYLTRANSFERASE"/>
    <property type="match status" value="1"/>
</dbReference>
<dbReference type="PANTHER" id="PTHR43464:SF91">
    <property type="entry name" value="SLL0487 PROTEIN"/>
    <property type="match status" value="1"/>
</dbReference>
<dbReference type="Pfam" id="PF13847">
    <property type="entry name" value="Methyltransf_31"/>
    <property type="match status" value="1"/>
</dbReference>
<dbReference type="SUPFAM" id="SSF53335">
    <property type="entry name" value="S-adenosyl-L-methionine-dependent methyltransferases"/>
    <property type="match status" value="1"/>
</dbReference>
<proteinExistence type="evidence at transcript level"/>